<sequence>MNKTAIALLALLASSASLAATPWQKITQPVPGSAQSIGSFSNGCIVGADTLPIQSEHYQVMRTDQRRYFGHPDLVMFIQRLSSQVSNLSLGTVLIGDMGMPAGGRFNGGHASHQTGLDVDIFLQLPKTRWTSAQLLRPQALDLVSRDGKHVVPTLWKPEIFSLIKLAAQDKDVTRIFVNPAIKQQLCLDAGTDRDWLRKVRPWFQHRAHMHVRLRCPADSLECEDQPLPPPGDGCGAELQSWFEPPKPGTTKPEKKTPPPLPPSCQALLDEHVI</sequence>
<feature type="signal peptide" evidence="1">
    <location>
        <begin position="1"/>
        <end position="19"/>
    </location>
</feature>
<feature type="chain" id="PRO_1000186100" description="Penicillin-insensitive murein endopeptidase">
    <location>
        <begin position="20"/>
        <end position="274"/>
    </location>
</feature>
<feature type="region of interest" description="Disordered" evidence="2">
    <location>
        <begin position="227"/>
        <end position="274"/>
    </location>
</feature>
<feature type="binding site" evidence="1">
    <location>
        <position position="110"/>
    </location>
    <ligand>
        <name>Zn(2+)</name>
        <dbReference type="ChEBI" id="CHEBI:29105"/>
        <label>1</label>
    </ligand>
</feature>
<feature type="binding site" evidence="1">
    <location>
        <position position="113"/>
    </location>
    <ligand>
        <name>Zn(2+)</name>
        <dbReference type="ChEBI" id="CHEBI:29105"/>
        <label>1</label>
    </ligand>
</feature>
<feature type="binding site" evidence="1">
    <location>
        <position position="120"/>
    </location>
    <ligand>
        <name>Zn(2+)</name>
        <dbReference type="ChEBI" id="CHEBI:29105"/>
        <label>1</label>
    </ligand>
</feature>
<feature type="binding site" evidence="1">
    <location>
        <position position="147"/>
    </location>
    <ligand>
        <name>Zn(2+)</name>
        <dbReference type="ChEBI" id="CHEBI:29105"/>
        <label>2</label>
    </ligand>
</feature>
<feature type="binding site" evidence="1">
    <location>
        <position position="150"/>
    </location>
    <ligand>
        <name>Zn(2+)</name>
        <dbReference type="ChEBI" id="CHEBI:29105"/>
        <label>2</label>
    </ligand>
</feature>
<feature type="binding site" evidence="1">
    <location>
        <position position="211"/>
    </location>
    <ligand>
        <name>Zn(2+)</name>
        <dbReference type="ChEBI" id="CHEBI:29105"/>
        <label>1</label>
    </ligand>
</feature>
<feature type="disulfide bond" evidence="1">
    <location>
        <begin position="44"/>
        <end position="265"/>
    </location>
</feature>
<feature type="disulfide bond" evidence="1">
    <location>
        <begin position="187"/>
        <end position="235"/>
    </location>
</feature>
<feature type="disulfide bond" evidence="1">
    <location>
        <begin position="216"/>
        <end position="223"/>
    </location>
</feature>
<dbReference type="EC" id="3.4.24.-" evidence="1"/>
<dbReference type="EMBL" id="CU928163">
    <property type="protein sequence ID" value="CAR13849.1"/>
    <property type="molecule type" value="Genomic_DNA"/>
</dbReference>
<dbReference type="RefSeq" id="WP_001043827.1">
    <property type="nucleotide sequence ID" value="NC_011751.1"/>
</dbReference>
<dbReference type="RefSeq" id="YP_002413377.1">
    <property type="nucleotide sequence ID" value="NC_011751.1"/>
</dbReference>
<dbReference type="SMR" id="B7N5U0"/>
<dbReference type="STRING" id="585056.ECUMN_2668"/>
<dbReference type="MEROPS" id="M74.001"/>
<dbReference type="KEGG" id="eum:ECUMN_2668"/>
<dbReference type="PATRIC" id="fig|585056.7.peg.2851"/>
<dbReference type="HOGENOM" id="CLU_052496_0_0_6"/>
<dbReference type="Proteomes" id="UP000007097">
    <property type="component" value="Chromosome"/>
</dbReference>
<dbReference type="GO" id="GO:0030288">
    <property type="term" value="C:outer membrane-bounded periplasmic space"/>
    <property type="evidence" value="ECO:0007669"/>
    <property type="project" value="InterPro"/>
</dbReference>
<dbReference type="GO" id="GO:0046872">
    <property type="term" value="F:metal ion binding"/>
    <property type="evidence" value="ECO:0007669"/>
    <property type="project" value="UniProtKB-KW"/>
</dbReference>
<dbReference type="GO" id="GO:0004222">
    <property type="term" value="F:metalloendopeptidase activity"/>
    <property type="evidence" value="ECO:0007669"/>
    <property type="project" value="UniProtKB-UniRule"/>
</dbReference>
<dbReference type="GO" id="GO:0004252">
    <property type="term" value="F:serine-type endopeptidase activity"/>
    <property type="evidence" value="ECO:0007669"/>
    <property type="project" value="InterPro"/>
</dbReference>
<dbReference type="GO" id="GO:0000270">
    <property type="term" value="P:peptidoglycan metabolic process"/>
    <property type="evidence" value="ECO:0007669"/>
    <property type="project" value="UniProtKB-UniRule"/>
</dbReference>
<dbReference type="GO" id="GO:0006508">
    <property type="term" value="P:proteolysis"/>
    <property type="evidence" value="ECO:0007669"/>
    <property type="project" value="UniProtKB-KW"/>
</dbReference>
<dbReference type="FunFam" id="3.30.1380.10:FF:000002">
    <property type="entry name" value="Penicillin-insensitive murein endopeptidase"/>
    <property type="match status" value="1"/>
</dbReference>
<dbReference type="Gene3D" id="3.30.1380.10">
    <property type="match status" value="1"/>
</dbReference>
<dbReference type="HAMAP" id="MF_01623">
    <property type="entry name" value="MepA"/>
    <property type="match status" value="1"/>
</dbReference>
<dbReference type="InterPro" id="IPR009045">
    <property type="entry name" value="Hedgehog_sig/DD-Pept_Zn-bd_sf"/>
</dbReference>
<dbReference type="InterPro" id="IPR005073">
    <property type="entry name" value="Peptidase_M74"/>
</dbReference>
<dbReference type="NCBIfam" id="NF006947">
    <property type="entry name" value="PRK09429.1"/>
    <property type="match status" value="1"/>
</dbReference>
<dbReference type="Pfam" id="PF03411">
    <property type="entry name" value="Peptidase_M74"/>
    <property type="match status" value="1"/>
</dbReference>
<dbReference type="PIRSF" id="PIRSF018455">
    <property type="entry name" value="MepA"/>
    <property type="match status" value="1"/>
</dbReference>
<dbReference type="SUPFAM" id="SSF55166">
    <property type="entry name" value="Hedgehog/DD-peptidase"/>
    <property type="match status" value="1"/>
</dbReference>
<name>MEPA_ECOLU</name>
<reference key="1">
    <citation type="journal article" date="2009" name="PLoS Genet.">
        <title>Organised genome dynamics in the Escherichia coli species results in highly diverse adaptive paths.</title>
        <authorList>
            <person name="Touchon M."/>
            <person name="Hoede C."/>
            <person name="Tenaillon O."/>
            <person name="Barbe V."/>
            <person name="Baeriswyl S."/>
            <person name="Bidet P."/>
            <person name="Bingen E."/>
            <person name="Bonacorsi S."/>
            <person name="Bouchier C."/>
            <person name="Bouvet O."/>
            <person name="Calteau A."/>
            <person name="Chiapello H."/>
            <person name="Clermont O."/>
            <person name="Cruveiller S."/>
            <person name="Danchin A."/>
            <person name="Diard M."/>
            <person name="Dossat C."/>
            <person name="Karoui M.E."/>
            <person name="Frapy E."/>
            <person name="Garry L."/>
            <person name="Ghigo J.M."/>
            <person name="Gilles A.M."/>
            <person name="Johnson J."/>
            <person name="Le Bouguenec C."/>
            <person name="Lescat M."/>
            <person name="Mangenot S."/>
            <person name="Martinez-Jehanne V."/>
            <person name="Matic I."/>
            <person name="Nassif X."/>
            <person name="Oztas S."/>
            <person name="Petit M.A."/>
            <person name="Pichon C."/>
            <person name="Rouy Z."/>
            <person name="Ruf C.S."/>
            <person name="Schneider D."/>
            <person name="Tourret J."/>
            <person name="Vacherie B."/>
            <person name="Vallenet D."/>
            <person name="Medigue C."/>
            <person name="Rocha E.P.C."/>
            <person name="Denamur E."/>
        </authorList>
    </citation>
    <scope>NUCLEOTIDE SEQUENCE [LARGE SCALE GENOMIC DNA]</scope>
    <source>
        <strain>UMN026 / ExPEC</strain>
    </source>
</reference>
<organism>
    <name type="scientific">Escherichia coli O17:K52:H18 (strain UMN026 / ExPEC)</name>
    <dbReference type="NCBI Taxonomy" id="585056"/>
    <lineage>
        <taxon>Bacteria</taxon>
        <taxon>Pseudomonadati</taxon>
        <taxon>Pseudomonadota</taxon>
        <taxon>Gammaproteobacteria</taxon>
        <taxon>Enterobacterales</taxon>
        <taxon>Enterobacteriaceae</taxon>
        <taxon>Escherichia</taxon>
    </lineage>
</organism>
<protein>
    <recommendedName>
        <fullName evidence="1">Penicillin-insensitive murein endopeptidase</fullName>
        <ecNumber evidence="1">3.4.24.-</ecNumber>
    </recommendedName>
    <alternativeName>
        <fullName evidence="1">D-alanyl-D-alanine-endopeptidase</fullName>
        <shortName evidence="1">DD-endopeptidase</shortName>
    </alternativeName>
</protein>
<accession>B7N5U0</accession>
<proteinExistence type="inferred from homology"/>
<comment type="function">
    <text evidence="1">Murein endopeptidase that cleaves the D-alanyl-meso-2,6-diamino-pimelyl amide bond that connects peptidoglycan strands. Likely plays a role in the removal of murein from the sacculus.</text>
</comment>
<comment type="cofactor">
    <cofactor evidence="1">
        <name>Zn(2+)</name>
        <dbReference type="ChEBI" id="CHEBI:29105"/>
    </cofactor>
    <text evidence="1">Binds 2 Zn(2+) ions per subunit. Zn(2+) ion 1 is bound in the active site. Zn(2+) ion 2 is bound at the dimer interface by residues from both subunits.</text>
</comment>
<comment type="subunit">
    <text evidence="1">Dimer.</text>
</comment>
<comment type="subcellular location">
    <subcellularLocation>
        <location evidence="1">Periplasm</location>
    </subcellularLocation>
</comment>
<comment type="similarity">
    <text evidence="1">Belongs to the peptidase M74 family.</text>
</comment>
<evidence type="ECO:0000255" key="1">
    <source>
        <dbReference type="HAMAP-Rule" id="MF_01623"/>
    </source>
</evidence>
<evidence type="ECO:0000256" key="2">
    <source>
        <dbReference type="SAM" id="MobiDB-lite"/>
    </source>
</evidence>
<gene>
    <name evidence="1" type="primary">mepA</name>
    <name type="ordered locus">ECUMN_2668</name>
</gene>
<keyword id="KW-1015">Disulfide bond</keyword>
<keyword id="KW-0378">Hydrolase</keyword>
<keyword id="KW-0479">Metal-binding</keyword>
<keyword id="KW-0482">Metalloprotease</keyword>
<keyword id="KW-0574">Periplasm</keyword>
<keyword id="KW-0645">Protease</keyword>
<keyword id="KW-0732">Signal</keyword>
<keyword id="KW-0862">Zinc</keyword>